<protein>
    <recommendedName>
        <fullName evidence="1">Ribulose bisphosphate carboxylase large chain</fullName>
        <shortName evidence="1">RuBisCO large subunit</shortName>
        <ecNumber evidence="1">4.1.1.39</ecNumber>
    </recommendedName>
</protein>
<comment type="function">
    <text evidence="1">RuBisCO catalyzes two reactions: the carboxylation of D-ribulose 1,5-bisphosphate, the primary event in carbon dioxide fixation, as well as the oxidative fragmentation of the pentose substrate in the photorespiration process. Both reactions occur simultaneously and in competition at the same active site.</text>
</comment>
<comment type="catalytic activity">
    <reaction evidence="1">
        <text>2 (2R)-3-phosphoglycerate + 2 H(+) = D-ribulose 1,5-bisphosphate + CO2 + H2O</text>
        <dbReference type="Rhea" id="RHEA:23124"/>
        <dbReference type="ChEBI" id="CHEBI:15377"/>
        <dbReference type="ChEBI" id="CHEBI:15378"/>
        <dbReference type="ChEBI" id="CHEBI:16526"/>
        <dbReference type="ChEBI" id="CHEBI:57870"/>
        <dbReference type="ChEBI" id="CHEBI:58272"/>
        <dbReference type="EC" id="4.1.1.39"/>
    </reaction>
</comment>
<comment type="catalytic activity">
    <reaction evidence="1">
        <text>D-ribulose 1,5-bisphosphate + O2 = 2-phosphoglycolate + (2R)-3-phosphoglycerate + 2 H(+)</text>
        <dbReference type="Rhea" id="RHEA:36631"/>
        <dbReference type="ChEBI" id="CHEBI:15378"/>
        <dbReference type="ChEBI" id="CHEBI:15379"/>
        <dbReference type="ChEBI" id="CHEBI:57870"/>
        <dbReference type="ChEBI" id="CHEBI:58033"/>
        <dbReference type="ChEBI" id="CHEBI:58272"/>
    </reaction>
</comment>
<comment type="cofactor">
    <cofactor evidence="1">
        <name>Mg(2+)</name>
        <dbReference type="ChEBI" id="CHEBI:18420"/>
    </cofactor>
    <text evidence="1">Binds 1 Mg(2+) ion per subunit.</text>
</comment>
<comment type="subunit">
    <text evidence="1">Heterohexadecamer of 8 large chains and 8 small chains; disulfide-linked. The disulfide link is formed within the large subunit homodimers.</text>
</comment>
<comment type="subcellular location">
    <subcellularLocation>
        <location>Plastid</location>
        <location>Chloroplast</location>
    </subcellularLocation>
</comment>
<comment type="PTM">
    <text evidence="1">The disulfide bond which can form in the large chain dimeric partners within the hexadecamer appears to be associated with oxidative stress and protein turnover.</text>
</comment>
<comment type="miscellaneous">
    <text evidence="1">The basic functional RuBisCO is composed of a large chain homodimer in a 'head-to-tail' conformation. In form I RuBisCO this homodimer is arranged in a barrel-like tetramer with the small subunits forming a tetrameric 'cap' on each end of the 'barrel'.</text>
</comment>
<comment type="similarity">
    <text evidence="1">Belongs to the RuBisCO large chain family. Type I subfamily.</text>
</comment>
<name>RBL_FOUSP</name>
<dbReference type="EC" id="4.1.1.39" evidence="1"/>
<dbReference type="EMBL" id="L11675">
    <property type="protein sequence ID" value="AAA84257.1"/>
    <property type="molecule type" value="Genomic_DNA"/>
</dbReference>
<dbReference type="SMR" id="Q05990"/>
<dbReference type="GO" id="GO:0009507">
    <property type="term" value="C:chloroplast"/>
    <property type="evidence" value="ECO:0007669"/>
    <property type="project" value="UniProtKB-SubCell"/>
</dbReference>
<dbReference type="GO" id="GO:0000287">
    <property type="term" value="F:magnesium ion binding"/>
    <property type="evidence" value="ECO:0007669"/>
    <property type="project" value="InterPro"/>
</dbReference>
<dbReference type="GO" id="GO:0004497">
    <property type="term" value="F:monooxygenase activity"/>
    <property type="evidence" value="ECO:0007669"/>
    <property type="project" value="UniProtKB-KW"/>
</dbReference>
<dbReference type="GO" id="GO:0016984">
    <property type="term" value="F:ribulose-bisphosphate carboxylase activity"/>
    <property type="evidence" value="ECO:0007669"/>
    <property type="project" value="UniProtKB-EC"/>
</dbReference>
<dbReference type="GO" id="GO:0009853">
    <property type="term" value="P:photorespiration"/>
    <property type="evidence" value="ECO:0007669"/>
    <property type="project" value="UniProtKB-KW"/>
</dbReference>
<dbReference type="GO" id="GO:0019253">
    <property type="term" value="P:reductive pentose-phosphate cycle"/>
    <property type="evidence" value="ECO:0007669"/>
    <property type="project" value="UniProtKB-KW"/>
</dbReference>
<dbReference type="CDD" id="cd08212">
    <property type="entry name" value="RuBisCO_large_I"/>
    <property type="match status" value="1"/>
</dbReference>
<dbReference type="FunFam" id="3.20.20.110:FF:000001">
    <property type="entry name" value="Ribulose bisphosphate carboxylase large chain"/>
    <property type="match status" value="1"/>
</dbReference>
<dbReference type="Gene3D" id="3.20.20.110">
    <property type="entry name" value="Ribulose bisphosphate carboxylase, large subunit, C-terminal domain"/>
    <property type="match status" value="1"/>
</dbReference>
<dbReference type="Gene3D" id="3.30.70.150">
    <property type="entry name" value="RuBisCO large subunit, N-terminal domain"/>
    <property type="match status" value="1"/>
</dbReference>
<dbReference type="HAMAP" id="MF_01338">
    <property type="entry name" value="RuBisCO_L_type1"/>
    <property type="match status" value="1"/>
</dbReference>
<dbReference type="InterPro" id="IPR033966">
    <property type="entry name" value="RuBisCO"/>
</dbReference>
<dbReference type="InterPro" id="IPR020878">
    <property type="entry name" value="RuBisCo_large_chain_AS"/>
</dbReference>
<dbReference type="InterPro" id="IPR000685">
    <property type="entry name" value="RuBisCO_lsu_C"/>
</dbReference>
<dbReference type="InterPro" id="IPR036376">
    <property type="entry name" value="RuBisCO_lsu_C_sf"/>
</dbReference>
<dbReference type="InterPro" id="IPR017443">
    <property type="entry name" value="RuBisCO_lsu_fd_N"/>
</dbReference>
<dbReference type="InterPro" id="IPR036422">
    <property type="entry name" value="RuBisCO_lsu_N_sf"/>
</dbReference>
<dbReference type="InterPro" id="IPR020888">
    <property type="entry name" value="RuBisCO_lsuI"/>
</dbReference>
<dbReference type="NCBIfam" id="NF003252">
    <property type="entry name" value="PRK04208.1"/>
    <property type="match status" value="1"/>
</dbReference>
<dbReference type="PANTHER" id="PTHR42704">
    <property type="entry name" value="RIBULOSE BISPHOSPHATE CARBOXYLASE"/>
    <property type="match status" value="1"/>
</dbReference>
<dbReference type="PANTHER" id="PTHR42704:SF15">
    <property type="entry name" value="RIBULOSE BISPHOSPHATE CARBOXYLASE LARGE CHAIN"/>
    <property type="match status" value="1"/>
</dbReference>
<dbReference type="Pfam" id="PF00016">
    <property type="entry name" value="RuBisCO_large"/>
    <property type="match status" value="1"/>
</dbReference>
<dbReference type="Pfam" id="PF02788">
    <property type="entry name" value="RuBisCO_large_N"/>
    <property type="match status" value="1"/>
</dbReference>
<dbReference type="SFLD" id="SFLDG01052">
    <property type="entry name" value="RuBisCO"/>
    <property type="match status" value="1"/>
</dbReference>
<dbReference type="SFLD" id="SFLDS00014">
    <property type="entry name" value="RuBisCO"/>
    <property type="match status" value="1"/>
</dbReference>
<dbReference type="SFLD" id="SFLDG00301">
    <property type="entry name" value="RuBisCO-like_proteins"/>
    <property type="match status" value="1"/>
</dbReference>
<dbReference type="SUPFAM" id="SSF51649">
    <property type="entry name" value="RuBisCo, C-terminal domain"/>
    <property type="match status" value="1"/>
</dbReference>
<dbReference type="SUPFAM" id="SSF54966">
    <property type="entry name" value="RuBisCO, large subunit, small (N-terminal) domain"/>
    <property type="match status" value="1"/>
</dbReference>
<dbReference type="PROSITE" id="PS00157">
    <property type="entry name" value="RUBISCO_LARGE"/>
    <property type="match status" value="1"/>
</dbReference>
<keyword id="KW-0113">Calvin cycle</keyword>
<keyword id="KW-0120">Carbon dioxide fixation</keyword>
<keyword id="KW-0150">Chloroplast</keyword>
<keyword id="KW-1015">Disulfide bond</keyword>
<keyword id="KW-0456">Lyase</keyword>
<keyword id="KW-0460">Magnesium</keyword>
<keyword id="KW-0479">Metal-binding</keyword>
<keyword id="KW-0503">Monooxygenase</keyword>
<keyword id="KW-0560">Oxidoreductase</keyword>
<keyword id="KW-0601">Photorespiration</keyword>
<keyword id="KW-0602">Photosynthesis</keyword>
<keyword id="KW-0934">Plastid</keyword>
<proteinExistence type="inferred from homology"/>
<sequence length="441" mass="48873">DILAAFRVTPQPGVPPEEAGAAVAPESSTGTWTTVWTDGLTSLDRYKGRCYHIEPVAGEENQYIAYVAYPLDLFEEGSVTNMFTSIVGNVFGFKALRALRLEDLRIPPAYSKTFQGPPHGIQVERDKLNKYGRPLLGCTIKPKLGLSAKNYGRAVYECLRGGLDFTKDDENVNSQPFMRWRDRFLFCAEAIYKAQAETGEIKGHYLNATAGTCEEMIKRAVFARELGVPIVMHDYLTGGFTANTSLAHYCRDNGLLLHIHRAMHAVIDRQKNRGMHFRVLAKALRMSGGDHIHAGTVVGKLEGERDITLGFVDLLRDDFLEKDRSRGIYFTQDWVSLPGVLPVASGGIHVWHMPALTEIFGDDSVLQFGGGTLGHPWGNAPGAVANRVALEACVQARNEGRDLAREGNEIIREASKWSPELAAACEVWKEIKFEFEAMDTL</sequence>
<accession>Q05990</accession>
<geneLocation type="chloroplast"/>
<feature type="chain" id="PRO_0000062474" description="Ribulose bisphosphate carboxylase large chain">
    <location>
        <begin position="1" status="less than"/>
        <end position="441"/>
    </location>
</feature>
<feature type="active site" description="Proton acceptor" evidence="1">
    <location>
        <position position="141"/>
    </location>
</feature>
<feature type="active site" description="Proton acceptor" evidence="1">
    <location>
        <position position="260"/>
    </location>
</feature>
<feature type="binding site" description="in homodimeric partner" evidence="1">
    <location>
        <position position="89"/>
    </location>
    <ligand>
        <name>substrate</name>
    </ligand>
</feature>
<feature type="binding site" evidence="1">
    <location>
        <position position="139"/>
    </location>
    <ligand>
        <name>substrate</name>
    </ligand>
</feature>
<feature type="binding site" evidence="1">
    <location>
        <position position="143"/>
    </location>
    <ligand>
        <name>substrate</name>
    </ligand>
</feature>
<feature type="binding site" description="via carbamate group" evidence="1">
    <location>
        <position position="167"/>
    </location>
    <ligand>
        <name>Mg(2+)</name>
        <dbReference type="ChEBI" id="CHEBI:18420"/>
    </ligand>
</feature>
<feature type="binding site" evidence="1">
    <location>
        <position position="169"/>
    </location>
    <ligand>
        <name>Mg(2+)</name>
        <dbReference type="ChEBI" id="CHEBI:18420"/>
    </ligand>
</feature>
<feature type="binding site" evidence="1">
    <location>
        <position position="170"/>
    </location>
    <ligand>
        <name>Mg(2+)</name>
        <dbReference type="ChEBI" id="CHEBI:18420"/>
    </ligand>
</feature>
<feature type="binding site" evidence="1">
    <location>
        <position position="261"/>
    </location>
    <ligand>
        <name>substrate</name>
    </ligand>
</feature>
<feature type="binding site" evidence="1">
    <location>
        <position position="293"/>
    </location>
    <ligand>
        <name>substrate</name>
    </ligand>
</feature>
<feature type="binding site" evidence="1">
    <location>
        <position position="345"/>
    </location>
    <ligand>
        <name>substrate</name>
    </ligand>
</feature>
<feature type="site" description="Transition state stabilizer" evidence="1">
    <location>
        <position position="300"/>
    </location>
</feature>
<feature type="modified residue" description="N6-carboxylysine" evidence="1">
    <location>
        <position position="167"/>
    </location>
</feature>
<feature type="disulfide bond" description="Interchain; in linked form" evidence="1">
    <location>
        <position position="213"/>
    </location>
</feature>
<feature type="non-terminal residue">
    <location>
        <position position="1"/>
    </location>
</feature>
<evidence type="ECO:0000255" key="1">
    <source>
        <dbReference type="HAMAP-Rule" id="MF_01338"/>
    </source>
</evidence>
<organism>
    <name type="scientific">Fouquieria splendens</name>
    <name type="common">Ocotillo</name>
    <dbReference type="NCBI Taxonomy" id="13533"/>
    <lineage>
        <taxon>Eukaryota</taxon>
        <taxon>Viridiplantae</taxon>
        <taxon>Streptophyta</taxon>
        <taxon>Embryophyta</taxon>
        <taxon>Tracheophyta</taxon>
        <taxon>Spermatophyta</taxon>
        <taxon>Magnoliopsida</taxon>
        <taxon>eudicotyledons</taxon>
        <taxon>Gunneridae</taxon>
        <taxon>Pentapetalae</taxon>
        <taxon>asterids</taxon>
        <taxon>Ericales</taxon>
        <taxon>Fouquieriaceae</taxon>
        <taxon>Fouquieria</taxon>
    </lineage>
</organism>
<gene>
    <name evidence="1" type="primary">rbcL</name>
</gene>
<reference key="1">
    <citation type="journal article" date="1992" name="Ann. Mo. Bot. Gard.">
        <title>Monophyly of the Asteridae and identification of their major lineages inferred from DNA sequences of rbcL.</title>
        <authorList>
            <person name="Olmstead R.G."/>
            <person name="Michaels H.J."/>
            <person name="Scott K.M."/>
            <person name="Palmer J.D."/>
        </authorList>
        <dbReference type="AGRICOLA" id="IND93014998"/>
    </citation>
    <scope>NUCLEOTIDE SEQUENCE [GENOMIC DNA]</scope>
</reference>